<feature type="chain" id="PRO_1000135870" description="Exoribonuclease 2">
    <location>
        <begin position="1"/>
        <end position="644"/>
    </location>
</feature>
<feature type="domain" description="RNB" evidence="1">
    <location>
        <begin position="189"/>
        <end position="516"/>
    </location>
</feature>
<feature type="domain" description="S1 motif" evidence="2">
    <location>
        <begin position="561"/>
        <end position="643"/>
    </location>
</feature>
<dbReference type="EC" id="3.1.13.1" evidence="2"/>
<dbReference type="EMBL" id="CU928158">
    <property type="protein sequence ID" value="CAQ89183.1"/>
    <property type="molecule type" value="Genomic_DNA"/>
</dbReference>
<dbReference type="RefSeq" id="WP_000484962.1">
    <property type="nucleotide sequence ID" value="NC_011740.1"/>
</dbReference>
<dbReference type="SMR" id="B7LRZ1"/>
<dbReference type="KEGG" id="efe:EFER_1667"/>
<dbReference type="HOGENOM" id="CLU_002333_7_3_6"/>
<dbReference type="OrthoDB" id="9764149at2"/>
<dbReference type="Proteomes" id="UP000000745">
    <property type="component" value="Chromosome"/>
</dbReference>
<dbReference type="GO" id="GO:0005829">
    <property type="term" value="C:cytosol"/>
    <property type="evidence" value="ECO:0007669"/>
    <property type="project" value="UniProtKB-ARBA"/>
</dbReference>
<dbReference type="GO" id="GO:0008859">
    <property type="term" value="F:exoribonuclease II activity"/>
    <property type="evidence" value="ECO:0007669"/>
    <property type="project" value="UniProtKB-UniRule"/>
</dbReference>
<dbReference type="GO" id="GO:0003723">
    <property type="term" value="F:RNA binding"/>
    <property type="evidence" value="ECO:0007669"/>
    <property type="project" value="UniProtKB-KW"/>
</dbReference>
<dbReference type="GO" id="GO:0006402">
    <property type="term" value="P:mRNA catabolic process"/>
    <property type="evidence" value="ECO:0007669"/>
    <property type="project" value="UniProtKB-UniRule"/>
</dbReference>
<dbReference type="FunFam" id="2.40.50.140:FF:000079">
    <property type="entry name" value="Exoribonuclease 2"/>
    <property type="match status" value="1"/>
</dbReference>
<dbReference type="FunFam" id="2.40.50.140:FF:000081">
    <property type="entry name" value="Exoribonuclease 2"/>
    <property type="match status" value="1"/>
</dbReference>
<dbReference type="FunFam" id="2.40.50.640:FF:000001">
    <property type="entry name" value="Exoribonuclease 2"/>
    <property type="match status" value="1"/>
</dbReference>
<dbReference type="Gene3D" id="2.40.50.640">
    <property type="match status" value="1"/>
</dbReference>
<dbReference type="Gene3D" id="2.40.50.140">
    <property type="entry name" value="Nucleic acid-binding proteins"/>
    <property type="match status" value="2"/>
</dbReference>
<dbReference type="HAMAP" id="MF_01036">
    <property type="entry name" value="RNase_II"/>
    <property type="match status" value="1"/>
</dbReference>
<dbReference type="InterPro" id="IPR011129">
    <property type="entry name" value="CSD"/>
</dbReference>
<dbReference type="InterPro" id="IPR012340">
    <property type="entry name" value="NA-bd_OB-fold"/>
</dbReference>
<dbReference type="InterPro" id="IPR013223">
    <property type="entry name" value="RNase_B_OB_dom"/>
</dbReference>
<dbReference type="InterPro" id="IPR011804">
    <property type="entry name" value="RNase_II"/>
</dbReference>
<dbReference type="InterPro" id="IPR001900">
    <property type="entry name" value="RNase_II/R"/>
</dbReference>
<dbReference type="InterPro" id="IPR022966">
    <property type="entry name" value="RNase_II/R_CS"/>
</dbReference>
<dbReference type="InterPro" id="IPR004476">
    <property type="entry name" value="RNase_II/RNase_R"/>
</dbReference>
<dbReference type="InterPro" id="IPR050180">
    <property type="entry name" value="RNR_Ribonuclease"/>
</dbReference>
<dbReference type="InterPro" id="IPR003029">
    <property type="entry name" value="S1_domain"/>
</dbReference>
<dbReference type="NCBIfam" id="TIGR00358">
    <property type="entry name" value="3_prime_RNase"/>
    <property type="match status" value="1"/>
</dbReference>
<dbReference type="NCBIfam" id="NF003455">
    <property type="entry name" value="PRK05054.1"/>
    <property type="match status" value="1"/>
</dbReference>
<dbReference type="NCBIfam" id="TIGR02062">
    <property type="entry name" value="RNase_B"/>
    <property type="match status" value="1"/>
</dbReference>
<dbReference type="PANTHER" id="PTHR23355:SF37">
    <property type="entry name" value="EXORIBONUCLEASE 2"/>
    <property type="match status" value="1"/>
</dbReference>
<dbReference type="PANTHER" id="PTHR23355">
    <property type="entry name" value="RIBONUCLEASE"/>
    <property type="match status" value="1"/>
</dbReference>
<dbReference type="Pfam" id="PF08206">
    <property type="entry name" value="OB_RNB"/>
    <property type="match status" value="1"/>
</dbReference>
<dbReference type="Pfam" id="PF00773">
    <property type="entry name" value="RNB"/>
    <property type="match status" value="1"/>
</dbReference>
<dbReference type="Pfam" id="PF00575">
    <property type="entry name" value="S1"/>
    <property type="match status" value="1"/>
</dbReference>
<dbReference type="SMART" id="SM00357">
    <property type="entry name" value="CSP"/>
    <property type="match status" value="1"/>
</dbReference>
<dbReference type="SMART" id="SM00955">
    <property type="entry name" value="RNB"/>
    <property type="match status" value="1"/>
</dbReference>
<dbReference type="SUPFAM" id="SSF50249">
    <property type="entry name" value="Nucleic acid-binding proteins"/>
    <property type="match status" value="4"/>
</dbReference>
<dbReference type="PROSITE" id="PS01175">
    <property type="entry name" value="RIBONUCLEASE_II"/>
    <property type="match status" value="1"/>
</dbReference>
<sequence>MFQDNPLLAQLKQQLHSQTPRAEGVVKATEKGFGFLEVDAQKSYFIPPPQMKKVMHGDRIIAVIHSEKDRESAEPEELVEPFLTRFVGKVQGKNDRLSIVPDHPLLKDAIPCRAARGVDHQFKEGDWAVAEMRRHPLKGDRSFYAELTQFITFGDDHFVPWWVTLARHNLEREAPNGVATEMLDEGLVRQDLTALNFVTIDSASTEDMDDALYAEALPDGKLQLTVAIADPTAWIAEGSKLDNVAKIRAFTNYLPGFNIPMLPRELSDDLCSLRAFEVRPALACRMTIAADGTIEDDIEFFAATIESKAKLVYDEVSDWLENSGNWQPENDAIAEQIRLLAQICQRRGEWRHNHALVFKDRPDYRFILGEKGEVLDIVAEPRRIANRIVEEAMIAANICAARVLRDKIGFGIYNVHMGFDPANADALAALLKTHGLHVDAQEVLTLEGFCKLRRELDAQPSGFLDSRIRRFQSFAEISTQPGPHFGLGLEAYATWTSPIRKYGDMINHRLLKAAIKGETASRPQDETTVQMTERRRLNRMAERDVGDWLYARFLKDKAGTDTRFAAEIIDISRGGMRVRLVDNGAVAFIPAPFLHAVRDELVCSQENGTVQIKGETVYKVTDVIDVTIAEVRMETRSIIARPVA</sequence>
<reference key="1">
    <citation type="journal article" date="2009" name="PLoS Genet.">
        <title>Organised genome dynamics in the Escherichia coli species results in highly diverse adaptive paths.</title>
        <authorList>
            <person name="Touchon M."/>
            <person name="Hoede C."/>
            <person name="Tenaillon O."/>
            <person name="Barbe V."/>
            <person name="Baeriswyl S."/>
            <person name="Bidet P."/>
            <person name="Bingen E."/>
            <person name="Bonacorsi S."/>
            <person name="Bouchier C."/>
            <person name="Bouvet O."/>
            <person name="Calteau A."/>
            <person name="Chiapello H."/>
            <person name="Clermont O."/>
            <person name="Cruveiller S."/>
            <person name="Danchin A."/>
            <person name="Diard M."/>
            <person name="Dossat C."/>
            <person name="Karoui M.E."/>
            <person name="Frapy E."/>
            <person name="Garry L."/>
            <person name="Ghigo J.M."/>
            <person name="Gilles A.M."/>
            <person name="Johnson J."/>
            <person name="Le Bouguenec C."/>
            <person name="Lescat M."/>
            <person name="Mangenot S."/>
            <person name="Martinez-Jehanne V."/>
            <person name="Matic I."/>
            <person name="Nassif X."/>
            <person name="Oztas S."/>
            <person name="Petit M.A."/>
            <person name="Pichon C."/>
            <person name="Rouy Z."/>
            <person name="Ruf C.S."/>
            <person name="Schneider D."/>
            <person name="Tourret J."/>
            <person name="Vacherie B."/>
            <person name="Vallenet D."/>
            <person name="Medigue C."/>
            <person name="Rocha E.P.C."/>
            <person name="Denamur E."/>
        </authorList>
    </citation>
    <scope>NUCLEOTIDE SEQUENCE [LARGE SCALE GENOMIC DNA]</scope>
    <source>
        <strain>ATCC 35469 / DSM 13698 / BCRC 15582 / CCUG 18766 / IAM 14443 / JCM 21226 / LMG 7866 / NBRC 102419 / NCTC 12128 / CDC 0568-73</strain>
    </source>
</reference>
<comment type="function">
    <text evidence="2">Involved in mRNA degradation. Hydrolyzes single-stranded polyribonucleotides processively in the 3' to 5' direction.</text>
</comment>
<comment type="catalytic activity">
    <reaction evidence="2">
        <text>Exonucleolytic cleavage in the 3'- to 5'-direction to yield nucleoside 5'-phosphates.</text>
        <dbReference type="EC" id="3.1.13.1"/>
    </reaction>
</comment>
<comment type="subcellular location">
    <subcellularLocation>
        <location evidence="2">Cytoplasm</location>
    </subcellularLocation>
</comment>
<comment type="similarity">
    <text evidence="2">Belongs to the RNR ribonuclease family. RNase II subfamily.</text>
</comment>
<accession>B7LRZ1</accession>
<proteinExistence type="inferred from homology"/>
<name>RNB_ESCF3</name>
<gene>
    <name evidence="2" type="primary">rnb</name>
    <name type="ordered locus">EFER_1667</name>
</gene>
<protein>
    <recommendedName>
        <fullName evidence="2">Exoribonuclease 2</fullName>
        <ecNumber evidence="2">3.1.13.1</ecNumber>
    </recommendedName>
    <alternativeName>
        <fullName evidence="2">Exoribonuclease II</fullName>
        <shortName evidence="2">RNase II</shortName>
        <shortName evidence="2">Ribonuclease II</shortName>
    </alternativeName>
</protein>
<keyword id="KW-0963">Cytoplasm</keyword>
<keyword id="KW-0269">Exonuclease</keyword>
<keyword id="KW-0378">Hydrolase</keyword>
<keyword id="KW-0540">Nuclease</keyword>
<keyword id="KW-0694">RNA-binding</keyword>
<organism>
    <name type="scientific">Escherichia fergusonii (strain ATCC 35469 / DSM 13698 / CCUG 18766 / IAM 14443 / JCM 21226 / LMG 7866 / NBRC 102419 / NCTC 12128 / CDC 0568-73)</name>
    <dbReference type="NCBI Taxonomy" id="585054"/>
    <lineage>
        <taxon>Bacteria</taxon>
        <taxon>Pseudomonadati</taxon>
        <taxon>Pseudomonadota</taxon>
        <taxon>Gammaproteobacteria</taxon>
        <taxon>Enterobacterales</taxon>
        <taxon>Enterobacteriaceae</taxon>
        <taxon>Escherichia</taxon>
    </lineage>
</organism>
<evidence type="ECO:0000255" key="1"/>
<evidence type="ECO:0000255" key="2">
    <source>
        <dbReference type="HAMAP-Rule" id="MF_01036"/>
    </source>
</evidence>